<dbReference type="EC" id="2.3.1.225"/>
<dbReference type="EMBL" id="DS231666">
    <property type="protein sequence ID" value="ESU12646.1"/>
    <property type="status" value="ALT_INIT"/>
    <property type="molecule type" value="Genomic_DNA"/>
</dbReference>
<dbReference type="EMBL" id="HG970335">
    <property type="protein sequence ID" value="CEF83441.1"/>
    <property type="molecule type" value="Genomic_DNA"/>
</dbReference>
<dbReference type="RefSeq" id="XP_011326153.1">
    <property type="nucleotide sequence ID" value="XM_011327851.1"/>
</dbReference>
<dbReference type="SMR" id="Q4I8B6"/>
<dbReference type="FunCoup" id="Q4I8B6">
    <property type="interactions" value="632"/>
</dbReference>
<dbReference type="STRING" id="229533.Q4I8B6"/>
<dbReference type="GeneID" id="23553671"/>
<dbReference type="KEGG" id="fgr:FGSG_06542"/>
<dbReference type="VEuPathDB" id="FungiDB:FGRAMPH1_01G22541"/>
<dbReference type="eggNOG" id="KOG0509">
    <property type="taxonomic scope" value="Eukaryota"/>
</dbReference>
<dbReference type="HOGENOM" id="CLU_012510_1_0_1"/>
<dbReference type="InParanoid" id="Q4I8B6"/>
<dbReference type="OrthoDB" id="70031at110618"/>
<dbReference type="PHI-base" id="PHI:1675"/>
<dbReference type="Proteomes" id="UP000070720">
    <property type="component" value="Chromosome 4"/>
</dbReference>
<dbReference type="GO" id="GO:0031901">
    <property type="term" value="C:early endosome membrane"/>
    <property type="evidence" value="ECO:0007669"/>
    <property type="project" value="UniProtKB-SubCell"/>
</dbReference>
<dbReference type="GO" id="GO:0000139">
    <property type="term" value="C:Golgi membrane"/>
    <property type="evidence" value="ECO:0007669"/>
    <property type="project" value="UniProtKB-SubCell"/>
</dbReference>
<dbReference type="GO" id="GO:0019706">
    <property type="term" value="F:protein-cysteine S-palmitoyltransferase activity"/>
    <property type="evidence" value="ECO:0007669"/>
    <property type="project" value="UniProtKB-EC"/>
</dbReference>
<dbReference type="Gene3D" id="1.25.40.20">
    <property type="entry name" value="Ankyrin repeat-containing domain"/>
    <property type="match status" value="1"/>
</dbReference>
<dbReference type="InterPro" id="IPR002110">
    <property type="entry name" value="Ankyrin_rpt"/>
</dbReference>
<dbReference type="InterPro" id="IPR036770">
    <property type="entry name" value="Ankyrin_rpt-contain_sf"/>
</dbReference>
<dbReference type="InterPro" id="IPR001594">
    <property type="entry name" value="Palmitoyltrfase_DHHC"/>
</dbReference>
<dbReference type="PANTHER" id="PTHR24161">
    <property type="entry name" value="ANK_REP_REGION DOMAIN-CONTAINING PROTEIN-RELATED"/>
    <property type="match status" value="1"/>
</dbReference>
<dbReference type="PANTHER" id="PTHR24161:SF85">
    <property type="entry name" value="PALMITOYLTRANSFERASE HIP14"/>
    <property type="match status" value="1"/>
</dbReference>
<dbReference type="Pfam" id="PF12796">
    <property type="entry name" value="Ank_2"/>
    <property type="match status" value="2"/>
</dbReference>
<dbReference type="Pfam" id="PF01529">
    <property type="entry name" value="DHHC"/>
    <property type="match status" value="1"/>
</dbReference>
<dbReference type="SMART" id="SM00248">
    <property type="entry name" value="ANK"/>
    <property type="match status" value="5"/>
</dbReference>
<dbReference type="SUPFAM" id="SSF48403">
    <property type="entry name" value="Ankyrin repeat"/>
    <property type="match status" value="1"/>
</dbReference>
<dbReference type="PROSITE" id="PS50297">
    <property type="entry name" value="ANK_REP_REGION"/>
    <property type="match status" value="1"/>
</dbReference>
<dbReference type="PROSITE" id="PS50088">
    <property type="entry name" value="ANK_REPEAT"/>
    <property type="match status" value="5"/>
</dbReference>
<dbReference type="PROSITE" id="PS50216">
    <property type="entry name" value="DHHC"/>
    <property type="match status" value="1"/>
</dbReference>
<name>AKR1_GIBZE</name>
<accession>Q4I8B6</accession>
<accession>A0A098DNJ1</accession>
<accession>A0A0E0SAH8</accession>
<accession>V6RE25</accession>
<feature type="chain" id="PRO_0000212924" description="Palmitoyltransferase AKR1">
    <location>
        <begin position="1"/>
        <end position="725"/>
    </location>
</feature>
<feature type="topological domain" description="Cytoplasmic" evidence="2">
    <location>
        <begin position="1"/>
        <end position="303"/>
    </location>
</feature>
<feature type="transmembrane region" description="Helical" evidence="2">
    <location>
        <begin position="304"/>
        <end position="324"/>
    </location>
</feature>
<feature type="topological domain" description="Lumenal" evidence="2">
    <location>
        <begin position="325"/>
        <end position="326"/>
    </location>
</feature>
<feature type="transmembrane region" description="Helical" evidence="2">
    <location>
        <begin position="327"/>
        <end position="347"/>
    </location>
</feature>
<feature type="topological domain" description="Cytoplasmic" evidence="2">
    <location>
        <begin position="348"/>
        <end position="364"/>
    </location>
</feature>
<feature type="transmembrane region" description="Helical" evidence="2">
    <location>
        <begin position="365"/>
        <end position="385"/>
    </location>
</feature>
<feature type="topological domain" description="Lumenal" evidence="2">
    <location>
        <begin position="386"/>
        <end position="397"/>
    </location>
</feature>
<feature type="transmembrane region" description="Helical" evidence="2">
    <location>
        <begin position="398"/>
        <end position="418"/>
    </location>
</feature>
<feature type="topological domain" description="Cytoplasmic" evidence="2">
    <location>
        <begin position="419"/>
        <end position="495"/>
    </location>
</feature>
<feature type="transmembrane region" description="Helical" evidence="2">
    <location>
        <begin position="496"/>
        <end position="516"/>
    </location>
</feature>
<feature type="topological domain" description="Lumenal" evidence="2">
    <location>
        <begin position="517"/>
        <end position="547"/>
    </location>
</feature>
<feature type="transmembrane region" description="Helical" evidence="2">
    <location>
        <begin position="548"/>
        <end position="568"/>
    </location>
</feature>
<feature type="topological domain" description="Cytoplasmic" evidence="2">
    <location>
        <begin position="569"/>
        <end position="725"/>
    </location>
</feature>
<feature type="repeat" description="ANK 1">
    <location>
        <begin position="84"/>
        <end position="113"/>
    </location>
</feature>
<feature type="repeat" description="ANK 2">
    <location>
        <begin position="118"/>
        <end position="147"/>
    </location>
</feature>
<feature type="repeat" description="ANK 3">
    <location>
        <begin position="151"/>
        <end position="180"/>
    </location>
</feature>
<feature type="repeat" description="ANK 4">
    <location>
        <begin position="184"/>
        <end position="213"/>
    </location>
</feature>
<feature type="repeat" description="ANK 5">
    <location>
        <begin position="217"/>
        <end position="246"/>
    </location>
</feature>
<feature type="domain" description="DHHC" evidence="3">
    <location>
        <begin position="451"/>
        <end position="501"/>
    </location>
</feature>
<feature type="active site" description="S-palmitoyl cysteine intermediate" evidence="3">
    <location>
        <position position="481"/>
    </location>
</feature>
<organism>
    <name type="scientific">Gibberella zeae (strain ATCC MYA-4620 / CBS 123657 / FGSC 9075 / NRRL 31084 / PH-1)</name>
    <name type="common">Wheat head blight fungus</name>
    <name type="synonym">Fusarium graminearum</name>
    <dbReference type="NCBI Taxonomy" id="229533"/>
    <lineage>
        <taxon>Eukaryota</taxon>
        <taxon>Fungi</taxon>
        <taxon>Dikarya</taxon>
        <taxon>Ascomycota</taxon>
        <taxon>Pezizomycotina</taxon>
        <taxon>Sordariomycetes</taxon>
        <taxon>Hypocreomycetidae</taxon>
        <taxon>Hypocreales</taxon>
        <taxon>Nectriaceae</taxon>
        <taxon>Fusarium</taxon>
    </lineage>
</organism>
<protein>
    <recommendedName>
        <fullName>Palmitoyltransferase AKR1</fullName>
        <ecNumber>2.3.1.225</ecNumber>
    </recommendedName>
    <alternativeName>
        <fullName>Ankyrin repeat-containing protein AKR1</fullName>
    </alternativeName>
</protein>
<gene>
    <name type="primary">AKR1</name>
    <name type="ORF">FGRRES_06542_M</name>
    <name type="ORF">FGSG_06542</name>
</gene>
<comment type="function">
    <text evidence="1">Palmitoyltransferase specific for casein kinase 1.</text>
</comment>
<comment type="catalytic activity">
    <reaction>
        <text>L-cysteinyl-[protein] + hexadecanoyl-CoA = S-hexadecanoyl-L-cysteinyl-[protein] + CoA</text>
        <dbReference type="Rhea" id="RHEA:36683"/>
        <dbReference type="Rhea" id="RHEA-COMP:10131"/>
        <dbReference type="Rhea" id="RHEA-COMP:11032"/>
        <dbReference type="ChEBI" id="CHEBI:29950"/>
        <dbReference type="ChEBI" id="CHEBI:57287"/>
        <dbReference type="ChEBI" id="CHEBI:57379"/>
        <dbReference type="ChEBI" id="CHEBI:74151"/>
        <dbReference type="EC" id="2.3.1.225"/>
    </reaction>
</comment>
<comment type="subcellular location">
    <subcellularLocation>
        <location>Early endosome membrane</location>
        <topology>Multi-pass membrane protein</topology>
    </subcellularLocation>
    <subcellularLocation>
        <location evidence="1">Golgi apparatus membrane</location>
        <topology evidence="1">Multi-pass membrane protein</topology>
    </subcellularLocation>
</comment>
<comment type="domain">
    <text evidence="1">The DHHC domain is required for palmitoyltransferase activity.</text>
</comment>
<comment type="similarity">
    <text evidence="4">Belongs to the DHHC palmitoyltransferase family. AKR/ZDHHC17 subfamily.</text>
</comment>
<comment type="sequence caution" evidence="4">
    <conflict type="erroneous initiation">
        <sequence resource="EMBL-CDS" id="ESU12646"/>
    </conflict>
    <text>Truncated N-terminus.</text>
</comment>
<proteinExistence type="inferred from homology"/>
<evidence type="ECO:0000250" key="1"/>
<evidence type="ECO:0000255" key="2"/>
<evidence type="ECO:0000255" key="3">
    <source>
        <dbReference type="PROSITE-ProRule" id="PRU00067"/>
    </source>
</evidence>
<evidence type="ECO:0000305" key="4"/>
<keyword id="KW-0012">Acyltransferase</keyword>
<keyword id="KW-0040">ANK repeat</keyword>
<keyword id="KW-0967">Endosome</keyword>
<keyword id="KW-0333">Golgi apparatus</keyword>
<keyword id="KW-0449">Lipoprotein</keyword>
<keyword id="KW-0472">Membrane</keyword>
<keyword id="KW-0564">Palmitate</keyword>
<keyword id="KW-1185">Reference proteome</keyword>
<keyword id="KW-0677">Repeat</keyword>
<keyword id="KW-0808">Transferase</keyword>
<keyword id="KW-0812">Transmembrane</keyword>
<keyword id="KW-1133">Transmembrane helix</keyword>
<sequence>MGTIAMASINTTSTSGGSAAPIQMSGKANAATPKLNSEVEMGSLPGDAQTQEDDIMQVARVGDVPAMEKLFESGEYDATYHDDEGITPLHWAAINNQYAMCKFLIEHGAEINRKGGESIATPLQWAAQRCHYYTVNLLLQHGADPLVTDAQGYNTLHISTFNGNVLLLVLLLHQGIPVDVIDTFGHTALMWAAYKGFPQCVDLFLRWGASVHATDEQGFTALHWALVKGSPGCILKLIEYGADRFAKTQTGKTPSVTAKELNTEVAWHRALTECGFDEDGHPAVPPWPGASYFLKDKRSFVTRFLFFWPFVLVWAMLVAMSSAPVYIGVPLGIAAVYAIQWVAQQVLEYAPSDMRHFHKTPWLTGIFAATLFWTGVNWLTTVLFATTLGAPEGKGHGILNFLFALFFGFTVYFYIASMRYDPGFVPKMNGIAEQKAVIDELLAQWKYDETNFCVTCMIQTPLRSKHCRRCQRCVAKHDHHCPWVYNCVGINNHRHFFFYLISLTMGIVSYDFLLYYYFDTVSKNASETCNVLSPTLCKYINADSYTSILAIWITMQLLWVTMLLFTQFIQVARAMTTYENMFGIRDGTNITALTSTGAPLDPNHPSLSATGPAAAHSHKHKGGMLKSLSRTLGVDPFIETITGRGAVSGKNKRKKKNPYSKGCITNCKDFWCDPAPIFGQRENGSAVLGGERVDYSAMYESPSLMTITGRRDRGGYEAVGTEDVV</sequence>
<reference key="1">
    <citation type="journal article" date="2007" name="Science">
        <title>The Fusarium graminearum genome reveals a link between localized polymorphism and pathogen specialization.</title>
        <authorList>
            <person name="Cuomo C.A."/>
            <person name="Gueldener U."/>
            <person name="Xu J.-R."/>
            <person name="Trail F."/>
            <person name="Turgeon B.G."/>
            <person name="Di Pietro A."/>
            <person name="Walton J.D."/>
            <person name="Ma L.-J."/>
            <person name="Baker S.E."/>
            <person name="Rep M."/>
            <person name="Adam G."/>
            <person name="Antoniw J."/>
            <person name="Baldwin T."/>
            <person name="Calvo S.E."/>
            <person name="Chang Y.-L."/>
            <person name="DeCaprio D."/>
            <person name="Gale L.R."/>
            <person name="Gnerre S."/>
            <person name="Goswami R.S."/>
            <person name="Hammond-Kosack K."/>
            <person name="Harris L.J."/>
            <person name="Hilburn K."/>
            <person name="Kennell J.C."/>
            <person name="Kroken S."/>
            <person name="Magnuson J.K."/>
            <person name="Mannhaupt G."/>
            <person name="Mauceli E.W."/>
            <person name="Mewes H.-W."/>
            <person name="Mitterbauer R."/>
            <person name="Muehlbauer G."/>
            <person name="Muensterkoetter M."/>
            <person name="Nelson D."/>
            <person name="O'Donnell K."/>
            <person name="Ouellet T."/>
            <person name="Qi W."/>
            <person name="Quesneville H."/>
            <person name="Roncero M.I.G."/>
            <person name="Seong K.-Y."/>
            <person name="Tetko I.V."/>
            <person name="Urban M."/>
            <person name="Waalwijk C."/>
            <person name="Ward T.J."/>
            <person name="Yao J."/>
            <person name="Birren B.W."/>
            <person name="Kistler H.C."/>
        </authorList>
    </citation>
    <scope>NUCLEOTIDE SEQUENCE [LARGE SCALE GENOMIC DNA]</scope>
    <source>
        <strain>ATCC MYA-4620 / CBS 123657 / FGSC 9075 / NRRL 31084 / PH-1</strain>
    </source>
</reference>
<reference key="2">
    <citation type="journal article" date="2010" name="Nature">
        <title>Comparative genomics reveals mobile pathogenicity chromosomes in Fusarium.</title>
        <authorList>
            <person name="Ma L.-J."/>
            <person name="van der Does H.C."/>
            <person name="Borkovich K.A."/>
            <person name="Coleman J.J."/>
            <person name="Daboussi M.-J."/>
            <person name="Di Pietro A."/>
            <person name="Dufresne M."/>
            <person name="Freitag M."/>
            <person name="Grabherr M."/>
            <person name="Henrissat B."/>
            <person name="Houterman P.M."/>
            <person name="Kang S."/>
            <person name="Shim W.-B."/>
            <person name="Woloshuk C."/>
            <person name="Xie X."/>
            <person name="Xu J.-R."/>
            <person name="Antoniw J."/>
            <person name="Baker S.E."/>
            <person name="Bluhm B.H."/>
            <person name="Breakspear A."/>
            <person name="Brown D.W."/>
            <person name="Butchko R.A.E."/>
            <person name="Chapman S."/>
            <person name="Coulson R."/>
            <person name="Coutinho P.M."/>
            <person name="Danchin E.G.J."/>
            <person name="Diener A."/>
            <person name="Gale L.R."/>
            <person name="Gardiner D.M."/>
            <person name="Goff S."/>
            <person name="Hammond-Kosack K.E."/>
            <person name="Hilburn K."/>
            <person name="Hua-Van A."/>
            <person name="Jonkers W."/>
            <person name="Kazan K."/>
            <person name="Kodira C.D."/>
            <person name="Koehrsen M."/>
            <person name="Kumar L."/>
            <person name="Lee Y.-H."/>
            <person name="Li L."/>
            <person name="Manners J.M."/>
            <person name="Miranda-Saavedra D."/>
            <person name="Mukherjee M."/>
            <person name="Park G."/>
            <person name="Park J."/>
            <person name="Park S.-Y."/>
            <person name="Proctor R.H."/>
            <person name="Regev A."/>
            <person name="Ruiz-Roldan M.C."/>
            <person name="Sain D."/>
            <person name="Sakthikumar S."/>
            <person name="Sykes S."/>
            <person name="Schwartz D.C."/>
            <person name="Turgeon B.G."/>
            <person name="Wapinski I."/>
            <person name="Yoder O."/>
            <person name="Young S."/>
            <person name="Zeng Q."/>
            <person name="Zhou S."/>
            <person name="Galagan J."/>
            <person name="Cuomo C.A."/>
            <person name="Kistler H.C."/>
            <person name="Rep M."/>
        </authorList>
    </citation>
    <scope>GENOME REANNOTATION</scope>
    <source>
        <strain>ATCC MYA-4620 / CBS 123657 / FGSC 9075 / NRRL 31084 / PH-1</strain>
    </source>
</reference>
<reference key="3">
    <citation type="journal article" date="2015" name="BMC Genomics">
        <title>The completed genome sequence of the pathogenic ascomycete fungus Fusarium graminearum.</title>
        <authorList>
            <person name="King R."/>
            <person name="Urban M."/>
            <person name="Hammond-Kosack M.C.U."/>
            <person name="Hassani-Pak K."/>
            <person name="Hammond-Kosack K.E."/>
        </authorList>
    </citation>
    <scope>NUCLEOTIDE SEQUENCE [LARGE SCALE GENOMIC DNA]</scope>
    <source>
        <strain>ATCC MYA-4620 / CBS 123657 / FGSC 9075 / NRRL 31084 / PH-1</strain>
    </source>
</reference>